<reference key="1">
    <citation type="journal article" date="2011" name="Biodegradation">
        <title>Fe-superoxide dismutase and 2-hydroxy-1,4-benzoquinone reductase preclude the auto-oxidation step in 4-aminophenol metabolism by Burkholderia sp. strain AK-5.</title>
        <authorList>
            <person name="Takenaka S."/>
            <person name="Koshiya J."/>
            <person name="Okugawa S."/>
            <person name="Takata A."/>
            <person name="Murakami S."/>
            <person name="Aoki K."/>
        </authorList>
    </citation>
    <scope>NUCLEOTIDE SEQUENCE [GENOMIC DNA]</scope>
    <scope>PROTEIN SEQUENCE OF 1-23 AND 152-168</scope>
    <scope>FUNCTION</scope>
    <scope>CATALYTIC ACTIVITY</scope>
    <scope>COFACTOR</scope>
    <scope>BIOPHYSICOCHEMICAL PROPERTIES</scope>
    <scope>SUBUNIT</scope>
    <source>
        <strain>AK-5</strain>
    </source>
</reference>
<proteinExistence type="evidence at protein level"/>
<sequence length="193" mass="21513">MEHTLPPLPFDKNALAPHMSEETLEYHYGKHHQTYVTNLNKLIPGTEFENLSLEEIVKKSSGGVFNNSAQVWNHTFFWNSLSPKGGGAPTGALADAINAKYGSFDKFKEEFAKVATGTFGSGWTWLVKKTDGTVDIVSTSNAATPLTTDAKALLTIDVWEHAYYIDYRNARPKFIEAYWNIANWDFAAKNFGA</sequence>
<protein>
    <recommendedName>
        <fullName evidence="5">Superoxide dismutase [Fe]</fullName>
        <ecNumber evidence="3">1.15.1.1</ecNumber>
    </recommendedName>
    <alternativeName>
        <fullName evidence="4">SOD-like protein</fullName>
    </alternativeName>
</protein>
<organism>
    <name type="scientific">Burkholderia sp</name>
    <dbReference type="NCBI Taxonomy" id="36773"/>
    <lineage>
        <taxon>Bacteria</taxon>
        <taxon>Pseudomonadati</taxon>
        <taxon>Pseudomonadota</taxon>
        <taxon>Betaproteobacteria</taxon>
        <taxon>Burkholderiales</taxon>
        <taxon>Burkholderiaceae</taxon>
        <taxon>Burkholderia</taxon>
    </lineage>
</organism>
<comment type="function">
    <text evidence="2 3">Destroys superoxide anion radicals which are normally produced within the cells and which are toxic to biological systems (By similarity). Involved in the metabolism of 4-aminophenol. May have an indirect role in hydroxyquinol metabolism by scavenging and detoxifying reactive species that promote its auto-oxidation (PubMed:20480210).</text>
</comment>
<comment type="catalytic activity">
    <reaction evidence="3">
        <text>2 superoxide + 2 H(+) = H2O2 + O2</text>
        <dbReference type="Rhea" id="RHEA:20696"/>
        <dbReference type="ChEBI" id="CHEBI:15378"/>
        <dbReference type="ChEBI" id="CHEBI:15379"/>
        <dbReference type="ChEBI" id="CHEBI:16240"/>
        <dbReference type="ChEBI" id="CHEBI:18421"/>
        <dbReference type="EC" id="1.15.1.1"/>
    </reaction>
</comment>
<comment type="cofactor">
    <cofactor evidence="3">
        <name>Fe cation</name>
        <dbReference type="ChEBI" id="CHEBI:24875"/>
    </cofactor>
    <text evidence="3">Binds 1 Fe cation per subunit.</text>
</comment>
<comment type="biophysicochemical properties">
    <phDependence>
        <text evidence="3">Optimum pH is 7.5.</text>
    </phDependence>
</comment>
<comment type="subunit">
    <text evidence="3">Monomer.</text>
</comment>
<comment type="similarity">
    <text evidence="5">Belongs to the iron/manganese superoxide dismutase family.</text>
</comment>
<name>SODF_BURSP</name>
<keyword id="KW-0903">Direct protein sequencing</keyword>
<keyword id="KW-0408">Iron</keyword>
<keyword id="KW-0479">Metal-binding</keyword>
<keyword id="KW-0560">Oxidoreductase</keyword>
<evidence type="ECO:0000250" key="1">
    <source>
        <dbReference type="UniProtKB" id="P09223"/>
    </source>
</evidence>
<evidence type="ECO:0000250" key="2">
    <source>
        <dbReference type="UniProtKB" id="P0AGD3"/>
    </source>
</evidence>
<evidence type="ECO:0000269" key="3">
    <source>
    </source>
</evidence>
<evidence type="ECO:0000303" key="4">
    <source>
    </source>
</evidence>
<evidence type="ECO:0000305" key="5"/>
<feature type="chain" id="PRO_0000441891" description="Superoxide dismutase [Fe]">
    <location>
        <begin position="1"/>
        <end position="193"/>
    </location>
</feature>
<feature type="binding site" evidence="1">
    <location>
        <position position="27"/>
    </location>
    <ligand>
        <name>Fe cation</name>
        <dbReference type="ChEBI" id="CHEBI:24875"/>
    </ligand>
</feature>
<feature type="binding site" evidence="1">
    <location>
        <position position="74"/>
    </location>
    <ligand>
        <name>Fe cation</name>
        <dbReference type="ChEBI" id="CHEBI:24875"/>
    </ligand>
</feature>
<feature type="binding site" evidence="1">
    <location>
        <position position="157"/>
    </location>
    <ligand>
        <name>Fe cation</name>
        <dbReference type="ChEBI" id="CHEBI:24875"/>
    </ligand>
</feature>
<feature type="binding site" evidence="1">
    <location>
        <position position="161"/>
    </location>
    <ligand>
        <name>Fe cation</name>
        <dbReference type="ChEBI" id="CHEBI:24875"/>
    </ligand>
</feature>
<feature type="sequence conflict" description="In Ref. 1; AA sequence." evidence="5" ref="1">
    <original>PHMS</original>
    <variation>DPMM</variation>
    <location>
        <begin position="17"/>
        <end position="20"/>
    </location>
</feature>
<feature type="sequence conflict" description="In Ref. 1; AA sequence." evidence="5" ref="1">
    <original>R</original>
    <variation>A</variation>
    <location>
        <position position="168"/>
    </location>
</feature>
<accession>D3KVM5</accession>
<dbReference type="EC" id="1.15.1.1" evidence="3"/>
<dbReference type="EMBL" id="AB518002">
    <property type="protein sequence ID" value="BAI77484.1"/>
    <property type="molecule type" value="Genomic_DNA"/>
</dbReference>
<dbReference type="SMR" id="D3KVM5"/>
<dbReference type="BioCyc" id="MetaCyc:MONOMER-17536"/>
<dbReference type="GO" id="GO:0046872">
    <property type="term" value="F:metal ion binding"/>
    <property type="evidence" value="ECO:0007669"/>
    <property type="project" value="UniProtKB-KW"/>
</dbReference>
<dbReference type="GO" id="GO:0004784">
    <property type="term" value="F:superoxide dismutase activity"/>
    <property type="evidence" value="ECO:0007669"/>
    <property type="project" value="UniProtKB-EC"/>
</dbReference>
<dbReference type="FunFam" id="1.10.287.990:FF:000002">
    <property type="entry name" value="Superoxide dismutase"/>
    <property type="match status" value="1"/>
</dbReference>
<dbReference type="FunFam" id="3.55.40.20:FF:000001">
    <property type="entry name" value="Superoxide dismutase"/>
    <property type="match status" value="1"/>
</dbReference>
<dbReference type="Gene3D" id="1.10.287.990">
    <property type="entry name" value="Fe,Mn superoxide dismutase (SOD) domain"/>
    <property type="match status" value="1"/>
</dbReference>
<dbReference type="Gene3D" id="3.55.40.20">
    <property type="entry name" value="Iron/manganese superoxide dismutase, C-terminal domain"/>
    <property type="match status" value="1"/>
</dbReference>
<dbReference type="InterPro" id="IPR001189">
    <property type="entry name" value="Mn/Fe_SOD"/>
</dbReference>
<dbReference type="InterPro" id="IPR019833">
    <property type="entry name" value="Mn/Fe_SOD_BS"/>
</dbReference>
<dbReference type="InterPro" id="IPR019832">
    <property type="entry name" value="Mn/Fe_SOD_C"/>
</dbReference>
<dbReference type="InterPro" id="IPR019831">
    <property type="entry name" value="Mn/Fe_SOD_N"/>
</dbReference>
<dbReference type="InterPro" id="IPR036324">
    <property type="entry name" value="Mn/Fe_SOD_N_sf"/>
</dbReference>
<dbReference type="InterPro" id="IPR036314">
    <property type="entry name" value="SOD_C_sf"/>
</dbReference>
<dbReference type="PANTHER" id="PTHR42769">
    <property type="entry name" value="SUPEROXIDE DISMUTASE"/>
    <property type="match status" value="1"/>
</dbReference>
<dbReference type="PANTHER" id="PTHR42769:SF3">
    <property type="entry name" value="SUPEROXIDE DISMUTASE [FE] 2, CHLOROPLASTIC"/>
    <property type="match status" value="1"/>
</dbReference>
<dbReference type="Pfam" id="PF02777">
    <property type="entry name" value="Sod_Fe_C"/>
    <property type="match status" value="1"/>
</dbReference>
<dbReference type="Pfam" id="PF00081">
    <property type="entry name" value="Sod_Fe_N"/>
    <property type="match status" value="1"/>
</dbReference>
<dbReference type="PIRSF" id="PIRSF000349">
    <property type="entry name" value="SODismutase"/>
    <property type="match status" value="1"/>
</dbReference>
<dbReference type="PRINTS" id="PR01703">
    <property type="entry name" value="MNSODISMTASE"/>
</dbReference>
<dbReference type="SUPFAM" id="SSF54719">
    <property type="entry name" value="Fe,Mn superoxide dismutase (SOD), C-terminal domain"/>
    <property type="match status" value="1"/>
</dbReference>
<dbReference type="SUPFAM" id="SSF46609">
    <property type="entry name" value="Fe,Mn superoxide dismutase (SOD), N-terminal domain"/>
    <property type="match status" value="1"/>
</dbReference>
<dbReference type="PROSITE" id="PS00088">
    <property type="entry name" value="SOD_MN"/>
    <property type="match status" value="1"/>
</dbReference>